<organism>
    <name type="scientific">Triticum aestivum</name>
    <name type="common">Wheat</name>
    <dbReference type="NCBI Taxonomy" id="4565"/>
    <lineage>
        <taxon>Eukaryota</taxon>
        <taxon>Viridiplantae</taxon>
        <taxon>Streptophyta</taxon>
        <taxon>Embryophyta</taxon>
        <taxon>Tracheophyta</taxon>
        <taxon>Spermatophyta</taxon>
        <taxon>Magnoliopsida</taxon>
        <taxon>Liliopsida</taxon>
        <taxon>Poales</taxon>
        <taxon>Poaceae</taxon>
        <taxon>BOP clade</taxon>
        <taxon>Pooideae</taxon>
        <taxon>Triticodae</taxon>
        <taxon>Triticeae</taxon>
        <taxon>Triticinae</taxon>
        <taxon>Triticum</taxon>
    </lineage>
</organism>
<protein>
    <recommendedName>
        <fullName>ATP-dependent 6-phosphofructokinase</fullName>
        <shortName>ATP-PFK</shortName>
        <shortName>Phosphofructokinase</shortName>
        <ecNumber>2.7.1.11</ecNumber>
    </recommendedName>
    <alternativeName>
        <fullName>Phosphohexokinase</fullName>
    </alternativeName>
</protein>
<reference key="1">
    <citation type="submission" date="2002-07" db="EMBL/GenBank/DDBJ databases">
        <authorList>
            <person name="Li Y."/>
            <person name="Tong Y."/>
            <person name="Liu J."/>
            <person name="Li B."/>
            <person name="Li J."/>
            <person name="Li Z."/>
        </authorList>
    </citation>
    <scope>NUCLEOTIDE SEQUENCE [MRNA]</scope>
</reference>
<sequence>FSRKTWRIFLQVYVIGGDGTMRGAVVIFEEFKRCRLRISITGIPKNLDNDIEIIDKAFGFQTAVESAQ</sequence>
<accession>Q8H215</accession>
<evidence type="ECO:0000250" key="1">
    <source>
        <dbReference type="UniProtKB" id="O15648"/>
    </source>
</evidence>
<evidence type="ECO:0000250" key="2">
    <source>
        <dbReference type="UniProtKB" id="Q9M0F9"/>
    </source>
</evidence>
<evidence type="ECO:0000305" key="3"/>
<comment type="function">
    <text evidence="2">Catalyzes the phosphorylation of D-fructose 6-phosphate to fructose 1,6-bisphosphate by ATP, the first committing step of glycolysis.</text>
</comment>
<comment type="catalytic activity">
    <reaction evidence="2">
        <text>beta-D-fructose 6-phosphate + ATP = beta-D-fructose 1,6-bisphosphate + ADP + H(+)</text>
        <dbReference type="Rhea" id="RHEA:16109"/>
        <dbReference type="ChEBI" id="CHEBI:15378"/>
        <dbReference type="ChEBI" id="CHEBI:30616"/>
        <dbReference type="ChEBI" id="CHEBI:32966"/>
        <dbReference type="ChEBI" id="CHEBI:57634"/>
        <dbReference type="ChEBI" id="CHEBI:456216"/>
        <dbReference type="EC" id="2.7.1.11"/>
    </reaction>
</comment>
<comment type="cofactor">
    <cofactor evidence="2">
        <name>Mg(2+)</name>
        <dbReference type="ChEBI" id="CHEBI:18420"/>
    </cofactor>
</comment>
<comment type="activity regulation">
    <text evidence="2">Allosterically activated by AMP.</text>
</comment>
<comment type="pathway">
    <text evidence="2">Carbohydrate degradation; glycolysis; D-glyceraldehyde 3-phosphate and glycerone phosphate from D-glucose: step 3/4.</text>
</comment>
<comment type="subunit">
    <text evidence="2">Homotetramer.</text>
</comment>
<comment type="subcellular location">
    <subcellularLocation>
        <location evidence="2">Cytoplasm</location>
    </subcellularLocation>
</comment>
<comment type="similarity">
    <text evidence="3">Belongs to the phosphofructokinase type A (PFKA) family. PPi-dependent PFK group II subfamily. Atypical ATP-dependent clade 'X' sub-subfamily.</text>
</comment>
<proteinExistence type="evidence at transcript level"/>
<name>PFKA_WHEAT</name>
<keyword id="KW-0021">Allosteric enzyme</keyword>
<keyword id="KW-0067">ATP-binding</keyword>
<keyword id="KW-0963">Cytoplasm</keyword>
<keyword id="KW-0324">Glycolysis</keyword>
<keyword id="KW-0418">Kinase</keyword>
<keyword id="KW-0460">Magnesium</keyword>
<keyword id="KW-0479">Metal-binding</keyword>
<keyword id="KW-0547">Nucleotide-binding</keyword>
<keyword id="KW-1185">Reference proteome</keyword>
<keyword id="KW-0808">Transferase</keyword>
<feature type="chain" id="PRO_0000423046" description="ATP-dependent 6-phosphofructokinase">
    <location>
        <begin position="1" status="less than"/>
        <end position="68" status="greater than"/>
    </location>
</feature>
<feature type="active site" description="Proton acceptor" evidence="1">
    <location>
        <position position="48"/>
    </location>
</feature>
<feature type="binding site" evidence="1">
    <location>
        <begin position="17"/>
        <end position="20"/>
    </location>
    <ligand>
        <name>ATP</name>
        <dbReference type="ChEBI" id="CHEBI:30616"/>
    </ligand>
</feature>
<feature type="binding site" evidence="1">
    <location>
        <position position="18"/>
    </location>
    <ligand>
        <name>Mg(2+)</name>
        <dbReference type="ChEBI" id="CHEBI:18420"/>
        <note>catalytic</note>
    </ligand>
</feature>
<feature type="site" description="Important for substrate specificity; cannot use PPi as phosphoryl donor" evidence="1">
    <location>
        <position position="19"/>
    </location>
</feature>
<feature type="non-terminal residue">
    <location>
        <position position="1"/>
    </location>
</feature>
<feature type="non-terminal residue">
    <location>
        <position position="68"/>
    </location>
</feature>
<gene>
    <name type="primary">PFK</name>
</gene>
<dbReference type="EC" id="2.7.1.11"/>
<dbReference type="EMBL" id="AY130765">
    <property type="protein sequence ID" value="AAN08156.1"/>
    <property type="molecule type" value="mRNA"/>
</dbReference>
<dbReference type="SMR" id="Q8H215"/>
<dbReference type="STRING" id="4565.Q8H215"/>
<dbReference type="PaxDb" id="4565-Traes_5BL_E13C98A72.2"/>
<dbReference type="eggNOG" id="KOG2440">
    <property type="taxonomic scope" value="Eukaryota"/>
</dbReference>
<dbReference type="SABIO-RK" id="Q8H215"/>
<dbReference type="UniPathway" id="UPA00109">
    <property type="reaction ID" value="UER00182"/>
</dbReference>
<dbReference type="Proteomes" id="UP000019116">
    <property type="component" value="Unplaced"/>
</dbReference>
<dbReference type="ExpressionAtlas" id="Q8H215">
    <property type="expression patterns" value="baseline and differential"/>
</dbReference>
<dbReference type="GO" id="GO:0005737">
    <property type="term" value="C:cytoplasm"/>
    <property type="evidence" value="ECO:0007669"/>
    <property type="project" value="UniProtKB-SubCell"/>
</dbReference>
<dbReference type="GO" id="GO:0003872">
    <property type="term" value="F:6-phosphofructokinase activity"/>
    <property type="evidence" value="ECO:0007669"/>
    <property type="project" value="UniProtKB-EC"/>
</dbReference>
<dbReference type="GO" id="GO:0005524">
    <property type="term" value="F:ATP binding"/>
    <property type="evidence" value="ECO:0007669"/>
    <property type="project" value="UniProtKB-KW"/>
</dbReference>
<dbReference type="GO" id="GO:0046872">
    <property type="term" value="F:metal ion binding"/>
    <property type="evidence" value="ECO:0007669"/>
    <property type="project" value="UniProtKB-KW"/>
</dbReference>
<dbReference type="GO" id="GO:0006002">
    <property type="term" value="P:fructose 6-phosphate metabolic process"/>
    <property type="evidence" value="ECO:0007669"/>
    <property type="project" value="InterPro"/>
</dbReference>
<dbReference type="Gene3D" id="3.40.50.450">
    <property type="match status" value="1"/>
</dbReference>
<dbReference type="InterPro" id="IPR022953">
    <property type="entry name" value="ATP_PFK"/>
</dbReference>
<dbReference type="InterPro" id="IPR050929">
    <property type="entry name" value="PFKA"/>
</dbReference>
<dbReference type="InterPro" id="IPR000023">
    <property type="entry name" value="Phosphofructokinase_dom"/>
</dbReference>
<dbReference type="InterPro" id="IPR035966">
    <property type="entry name" value="PKF_sf"/>
</dbReference>
<dbReference type="PANTHER" id="PTHR45770">
    <property type="entry name" value="ATP-DEPENDENT 6-PHOSPHOFRUCTOKINASE 1"/>
    <property type="match status" value="1"/>
</dbReference>
<dbReference type="Pfam" id="PF00365">
    <property type="entry name" value="PFK"/>
    <property type="match status" value="1"/>
</dbReference>
<dbReference type="PRINTS" id="PR00476">
    <property type="entry name" value="PHFRCTKINASE"/>
</dbReference>
<dbReference type="SUPFAM" id="SSF53784">
    <property type="entry name" value="Phosphofructokinase"/>
    <property type="match status" value="1"/>
</dbReference>